<gene>
    <name evidence="1" type="primary">yggU</name>
    <name type="ordered locus">SeHA_C3341</name>
</gene>
<protein>
    <recommendedName>
        <fullName evidence="1">UPF0235 protein YggU</fullName>
    </recommendedName>
</protein>
<feature type="chain" id="PRO_1000130710" description="UPF0235 protein YggU">
    <location>
        <begin position="1"/>
        <end position="96"/>
    </location>
</feature>
<evidence type="ECO:0000255" key="1">
    <source>
        <dbReference type="HAMAP-Rule" id="MF_00634"/>
    </source>
</evidence>
<reference key="1">
    <citation type="journal article" date="2011" name="J. Bacteriol.">
        <title>Comparative genomics of 28 Salmonella enterica isolates: evidence for CRISPR-mediated adaptive sublineage evolution.</title>
        <authorList>
            <person name="Fricke W.F."/>
            <person name="Mammel M.K."/>
            <person name="McDermott P.F."/>
            <person name="Tartera C."/>
            <person name="White D.G."/>
            <person name="Leclerc J.E."/>
            <person name="Ravel J."/>
            <person name="Cebula T.A."/>
        </authorList>
    </citation>
    <scope>NUCLEOTIDE SEQUENCE [LARGE SCALE GENOMIC DNA]</scope>
    <source>
        <strain>SL476</strain>
    </source>
</reference>
<sequence length="96" mass="10559">MSAVTRCEDGLVLRLYIQPKASRDSIVGLHGDEVKVAITAPPVDGQANSHLIKFLGKQFRVAKSQIVIEKGELGRHKQVKIIHPQQIPPEITALTE</sequence>
<name>YGGU_SALHS</name>
<proteinExistence type="inferred from homology"/>
<accession>B4THI7</accession>
<organism>
    <name type="scientific">Salmonella heidelberg (strain SL476)</name>
    <dbReference type="NCBI Taxonomy" id="454169"/>
    <lineage>
        <taxon>Bacteria</taxon>
        <taxon>Pseudomonadati</taxon>
        <taxon>Pseudomonadota</taxon>
        <taxon>Gammaproteobacteria</taxon>
        <taxon>Enterobacterales</taxon>
        <taxon>Enterobacteriaceae</taxon>
        <taxon>Salmonella</taxon>
    </lineage>
</organism>
<dbReference type="EMBL" id="CP001120">
    <property type="protein sequence ID" value="ACF66827.1"/>
    <property type="molecule type" value="Genomic_DNA"/>
</dbReference>
<dbReference type="RefSeq" id="WP_001277204.1">
    <property type="nucleotide sequence ID" value="NC_011083.1"/>
</dbReference>
<dbReference type="SMR" id="B4THI7"/>
<dbReference type="KEGG" id="seh:SeHA_C3341"/>
<dbReference type="HOGENOM" id="CLU_130694_5_0_6"/>
<dbReference type="Proteomes" id="UP000001866">
    <property type="component" value="Chromosome"/>
</dbReference>
<dbReference type="GO" id="GO:0005737">
    <property type="term" value="C:cytoplasm"/>
    <property type="evidence" value="ECO:0007669"/>
    <property type="project" value="TreeGrafter"/>
</dbReference>
<dbReference type="Gene3D" id="3.30.1200.10">
    <property type="entry name" value="YggU-like"/>
    <property type="match status" value="1"/>
</dbReference>
<dbReference type="HAMAP" id="MF_00634">
    <property type="entry name" value="UPF0235"/>
    <property type="match status" value="1"/>
</dbReference>
<dbReference type="InterPro" id="IPR003746">
    <property type="entry name" value="DUF167"/>
</dbReference>
<dbReference type="InterPro" id="IPR036591">
    <property type="entry name" value="YggU-like_sf"/>
</dbReference>
<dbReference type="NCBIfam" id="TIGR00251">
    <property type="entry name" value="DUF167 family protein"/>
    <property type="match status" value="1"/>
</dbReference>
<dbReference type="NCBIfam" id="NF003466">
    <property type="entry name" value="PRK05090.1"/>
    <property type="match status" value="1"/>
</dbReference>
<dbReference type="PANTHER" id="PTHR13420">
    <property type="entry name" value="UPF0235 PROTEIN C15ORF40"/>
    <property type="match status" value="1"/>
</dbReference>
<dbReference type="PANTHER" id="PTHR13420:SF7">
    <property type="entry name" value="UPF0235 PROTEIN C15ORF40"/>
    <property type="match status" value="1"/>
</dbReference>
<dbReference type="Pfam" id="PF02594">
    <property type="entry name" value="DUF167"/>
    <property type="match status" value="1"/>
</dbReference>
<dbReference type="SMART" id="SM01152">
    <property type="entry name" value="DUF167"/>
    <property type="match status" value="1"/>
</dbReference>
<dbReference type="SUPFAM" id="SSF69786">
    <property type="entry name" value="YggU-like"/>
    <property type="match status" value="1"/>
</dbReference>
<comment type="similarity">
    <text evidence="1">Belongs to the UPF0235 family.</text>
</comment>